<feature type="signal peptide" evidence="1">
    <location>
        <begin position="1"/>
        <end position="23"/>
    </location>
</feature>
<feature type="chain" id="PRO_0000446847" description="Scoloptoxin SSD552" evidence="3">
    <location>
        <begin position="24"/>
        <end position="210"/>
    </location>
</feature>
<accession>P0DPU0</accession>
<sequence length="210" mass="23032">MNILLSSTLFVLLMFQIIGSGMGCDMKVRGLDANMKKMILDLHNKKRQIVANGQQSGQPLAANMKELHWDDEIEAIAQRSAETCVFKHTAKSLRKSSKYSYLGENVYKGGYPDPIPRSVNKWYDEVKDVTPAVVKSFSDDGPMIGHYTQMVWANTEALGCGLVTASDGTSYLFCQYGPGGNYPGQQIYKQGPPGSGCKNGKSSKYPGLCN</sequence>
<name>VA552_SCODE</name>
<protein>
    <recommendedName>
        <fullName evidence="2">Scoloptoxin SSD552</fullName>
    </recommendedName>
    <alternativeName>
        <fullName evidence="3">Cysteine-rich venom protein</fullName>
        <shortName evidence="3">CRVP</shortName>
    </alternativeName>
</protein>
<keyword id="KW-0903">Direct protein sequencing</keyword>
<keyword id="KW-1015">Disulfide bond</keyword>
<keyword id="KW-0964">Secreted</keyword>
<keyword id="KW-0732">Signal</keyword>
<comment type="subcellular location">
    <subcellularLocation>
        <location evidence="1">Secreted</location>
    </subcellularLocation>
</comment>
<comment type="tissue specificity">
    <text evidence="4">Expressed by the venom gland.</text>
</comment>
<comment type="PTM">
    <text evidence="3">Contains 3 disulfide bonds.</text>
</comment>
<comment type="mass spectrometry" mass="20485.6" method="MALDI" evidence="1"/>
<comment type="similarity">
    <text evidence="3">Belongs to the CRISP family. Venom allergen 5-like subfamily.</text>
</comment>
<evidence type="ECO:0000269" key="1">
    <source>
    </source>
</evidence>
<evidence type="ECO:0000303" key="2">
    <source>
    </source>
</evidence>
<evidence type="ECO:0000305" key="3"/>
<evidence type="ECO:0000305" key="4">
    <source>
    </source>
</evidence>
<organism>
    <name type="scientific">Scolopendra dehaani</name>
    <name type="common">Thai centipede</name>
    <name type="synonym">Scolopendra subspinipes dehaani</name>
    <dbReference type="NCBI Taxonomy" id="2609776"/>
    <lineage>
        <taxon>Eukaryota</taxon>
        <taxon>Metazoa</taxon>
        <taxon>Ecdysozoa</taxon>
        <taxon>Arthropoda</taxon>
        <taxon>Myriapoda</taxon>
        <taxon>Chilopoda</taxon>
        <taxon>Pleurostigmophora</taxon>
        <taxon>Scolopendromorpha</taxon>
        <taxon>Scolopendridae</taxon>
        <taxon>Scolopendra</taxon>
    </lineage>
</organism>
<reference key="1">
    <citation type="journal article" date="2012" name="J. Proteome Res.">
        <title>Venomic and transcriptomic analysis of centipede Scolopendra subspinipes dehaani.</title>
        <authorList>
            <person name="Liu Z.C."/>
            <person name="Zhang R."/>
            <person name="Zhao F."/>
            <person name="Chen Z.M."/>
            <person name="Liu H.W."/>
            <person name="Wang Y.J."/>
            <person name="Jiang P."/>
            <person name="Zhang Y."/>
            <person name="Wu Y."/>
            <person name="Ding J.P."/>
            <person name="Lee W.H."/>
            <person name="Zhang Y."/>
        </authorList>
    </citation>
    <scope>NUCLEOTIDE SEQUENCE [MRNA]</scope>
    <scope>PROTEIN SEQUENCE OF 24-53</scope>
    <scope>SUBCELLULAR LOCATION</scope>
    <scope>MASS SPECTROMETRY</scope>
    <source>
        <tissue>Venom</tissue>
        <tissue>Venom gland</tissue>
    </source>
</reference>
<proteinExistence type="evidence at protein level"/>
<dbReference type="EMBL" id="KC144549">
    <property type="status" value="NOT_ANNOTATED_CDS"/>
    <property type="molecule type" value="mRNA"/>
</dbReference>
<dbReference type="SMR" id="P0DPU0"/>
<dbReference type="GO" id="GO:0005576">
    <property type="term" value="C:extracellular region"/>
    <property type="evidence" value="ECO:0007669"/>
    <property type="project" value="UniProtKB-SubCell"/>
</dbReference>
<dbReference type="CDD" id="cd05380">
    <property type="entry name" value="CAP_euk"/>
    <property type="match status" value="1"/>
</dbReference>
<dbReference type="Gene3D" id="3.40.33.10">
    <property type="entry name" value="CAP"/>
    <property type="match status" value="1"/>
</dbReference>
<dbReference type="InterPro" id="IPR018244">
    <property type="entry name" value="Allrgn_V5/Tpx1_CS"/>
</dbReference>
<dbReference type="InterPro" id="IPR014044">
    <property type="entry name" value="CAP_dom"/>
</dbReference>
<dbReference type="InterPro" id="IPR035940">
    <property type="entry name" value="CAP_sf"/>
</dbReference>
<dbReference type="InterPro" id="IPR001283">
    <property type="entry name" value="CRISP-related"/>
</dbReference>
<dbReference type="InterPro" id="IPR002413">
    <property type="entry name" value="V5_allergen-like"/>
</dbReference>
<dbReference type="PANTHER" id="PTHR10334">
    <property type="entry name" value="CYSTEINE-RICH SECRETORY PROTEIN-RELATED"/>
    <property type="match status" value="1"/>
</dbReference>
<dbReference type="Pfam" id="PF00188">
    <property type="entry name" value="CAP"/>
    <property type="match status" value="1"/>
</dbReference>
<dbReference type="PRINTS" id="PR00838">
    <property type="entry name" value="V5ALLERGEN"/>
</dbReference>
<dbReference type="PRINTS" id="PR00837">
    <property type="entry name" value="V5TPXLIKE"/>
</dbReference>
<dbReference type="SMART" id="SM00198">
    <property type="entry name" value="SCP"/>
    <property type="match status" value="1"/>
</dbReference>
<dbReference type="SUPFAM" id="SSF55797">
    <property type="entry name" value="PR-1-like"/>
    <property type="match status" value="1"/>
</dbReference>
<dbReference type="PROSITE" id="PS01009">
    <property type="entry name" value="CRISP_1"/>
    <property type="match status" value="1"/>
</dbReference>
<dbReference type="PROSITE" id="PS01010">
    <property type="entry name" value="CRISP_2"/>
    <property type="match status" value="1"/>
</dbReference>